<dbReference type="EMBL" id="AM408590">
    <property type="protein sequence ID" value="CAL70745.1"/>
    <property type="molecule type" value="Genomic_DNA"/>
</dbReference>
<dbReference type="RefSeq" id="WP_003403594.1">
    <property type="nucleotide sequence ID" value="NC_008769.1"/>
</dbReference>
<dbReference type="SMR" id="A1KGJ0"/>
<dbReference type="GeneID" id="45424674"/>
<dbReference type="KEGG" id="mbb:BCG_0759"/>
<dbReference type="HOGENOM" id="CLU_158491_3_3_11"/>
<dbReference type="Proteomes" id="UP000001472">
    <property type="component" value="Chromosome"/>
</dbReference>
<dbReference type="GO" id="GO:0022625">
    <property type="term" value="C:cytosolic large ribosomal subunit"/>
    <property type="evidence" value="ECO:0007669"/>
    <property type="project" value="TreeGrafter"/>
</dbReference>
<dbReference type="GO" id="GO:0003735">
    <property type="term" value="F:structural constituent of ribosome"/>
    <property type="evidence" value="ECO:0007669"/>
    <property type="project" value="InterPro"/>
</dbReference>
<dbReference type="GO" id="GO:0006412">
    <property type="term" value="P:translation"/>
    <property type="evidence" value="ECO:0007669"/>
    <property type="project" value="UniProtKB-UniRule"/>
</dbReference>
<dbReference type="CDD" id="cd00427">
    <property type="entry name" value="Ribosomal_L29_HIP"/>
    <property type="match status" value="1"/>
</dbReference>
<dbReference type="FunFam" id="1.10.287.310:FF:000001">
    <property type="entry name" value="50S ribosomal protein L29"/>
    <property type="match status" value="1"/>
</dbReference>
<dbReference type="Gene3D" id="1.10.287.310">
    <property type="match status" value="1"/>
</dbReference>
<dbReference type="HAMAP" id="MF_00374">
    <property type="entry name" value="Ribosomal_uL29"/>
    <property type="match status" value="1"/>
</dbReference>
<dbReference type="InterPro" id="IPR050063">
    <property type="entry name" value="Ribosomal_protein_uL29"/>
</dbReference>
<dbReference type="InterPro" id="IPR001854">
    <property type="entry name" value="Ribosomal_uL29"/>
</dbReference>
<dbReference type="InterPro" id="IPR018254">
    <property type="entry name" value="Ribosomal_uL29_CS"/>
</dbReference>
<dbReference type="InterPro" id="IPR036049">
    <property type="entry name" value="Ribosomal_uL29_sf"/>
</dbReference>
<dbReference type="NCBIfam" id="TIGR00012">
    <property type="entry name" value="L29"/>
    <property type="match status" value="1"/>
</dbReference>
<dbReference type="PANTHER" id="PTHR10916">
    <property type="entry name" value="60S RIBOSOMAL PROTEIN L35/50S RIBOSOMAL PROTEIN L29"/>
    <property type="match status" value="1"/>
</dbReference>
<dbReference type="PANTHER" id="PTHR10916:SF0">
    <property type="entry name" value="LARGE RIBOSOMAL SUBUNIT PROTEIN UL29C"/>
    <property type="match status" value="1"/>
</dbReference>
<dbReference type="Pfam" id="PF00831">
    <property type="entry name" value="Ribosomal_L29"/>
    <property type="match status" value="1"/>
</dbReference>
<dbReference type="SUPFAM" id="SSF46561">
    <property type="entry name" value="Ribosomal protein L29 (L29p)"/>
    <property type="match status" value="1"/>
</dbReference>
<dbReference type="PROSITE" id="PS00579">
    <property type="entry name" value="RIBOSOMAL_L29"/>
    <property type="match status" value="1"/>
</dbReference>
<proteinExistence type="inferred from homology"/>
<evidence type="ECO:0000255" key="1">
    <source>
        <dbReference type="HAMAP-Rule" id="MF_00374"/>
    </source>
</evidence>
<evidence type="ECO:0000305" key="2"/>
<comment type="similarity">
    <text evidence="1">Belongs to the universal ribosomal protein uL29 family.</text>
</comment>
<reference key="1">
    <citation type="journal article" date="2007" name="Proc. Natl. Acad. Sci. U.S.A.">
        <title>Genome plasticity of BCG and impact on vaccine efficacy.</title>
        <authorList>
            <person name="Brosch R."/>
            <person name="Gordon S.V."/>
            <person name="Garnier T."/>
            <person name="Eiglmeier K."/>
            <person name="Frigui W."/>
            <person name="Valenti P."/>
            <person name="Dos Santos S."/>
            <person name="Duthoy S."/>
            <person name="Lacroix C."/>
            <person name="Garcia-Pelayo C."/>
            <person name="Inwald J.K."/>
            <person name="Golby P."/>
            <person name="Garcia J.N."/>
            <person name="Hewinson R.G."/>
            <person name="Behr M.A."/>
            <person name="Quail M.A."/>
            <person name="Churcher C."/>
            <person name="Barrell B.G."/>
            <person name="Parkhill J."/>
            <person name="Cole S.T."/>
        </authorList>
    </citation>
    <scope>NUCLEOTIDE SEQUENCE [LARGE SCALE GENOMIC DNA]</scope>
    <source>
        <strain>BCG / Pasteur 1173P2</strain>
    </source>
</reference>
<gene>
    <name evidence="1" type="primary">rpmC</name>
    <name type="ordered locus">BCG_0759</name>
</gene>
<sequence length="77" mass="8859">MAVGVSPGELRELTDEELAERLRESKEELFNLRFQMATGQLNNNRRLRTVRQEIARIYTVLRERELGLATGPDGKES</sequence>
<keyword id="KW-0687">Ribonucleoprotein</keyword>
<keyword id="KW-0689">Ribosomal protein</keyword>
<name>RL29_MYCBP</name>
<accession>A1KGJ0</accession>
<protein>
    <recommendedName>
        <fullName evidence="1">Large ribosomal subunit protein uL29</fullName>
    </recommendedName>
    <alternativeName>
        <fullName evidence="2">50S ribosomal protein L29</fullName>
    </alternativeName>
</protein>
<feature type="chain" id="PRO_1000007527" description="Large ribosomal subunit protein uL29">
    <location>
        <begin position="1"/>
        <end position="77"/>
    </location>
</feature>
<organism>
    <name type="scientific">Mycobacterium bovis (strain BCG / Pasteur 1173P2)</name>
    <dbReference type="NCBI Taxonomy" id="410289"/>
    <lineage>
        <taxon>Bacteria</taxon>
        <taxon>Bacillati</taxon>
        <taxon>Actinomycetota</taxon>
        <taxon>Actinomycetes</taxon>
        <taxon>Mycobacteriales</taxon>
        <taxon>Mycobacteriaceae</taxon>
        <taxon>Mycobacterium</taxon>
        <taxon>Mycobacterium tuberculosis complex</taxon>
    </lineage>
</organism>